<name>KHSE_LISMF</name>
<organism>
    <name type="scientific">Listeria monocytogenes serotype 4b (strain F2365)</name>
    <dbReference type="NCBI Taxonomy" id="265669"/>
    <lineage>
        <taxon>Bacteria</taxon>
        <taxon>Bacillati</taxon>
        <taxon>Bacillota</taxon>
        <taxon>Bacilli</taxon>
        <taxon>Bacillales</taxon>
        <taxon>Listeriaceae</taxon>
        <taxon>Listeria</taxon>
    </lineage>
</organism>
<feature type="chain" id="PRO_0000156583" description="Homoserine kinase">
    <location>
        <begin position="1"/>
        <end position="288"/>
    </location>
</feature>
<feature type="binding site" evidence="1">
    <location>
        <begin position="79"/>
        <end position="89"/>
    </location>
    <ligand>
        <name>ATP</name>
        <dbReference type="ChEBI" id="CHEBI:30616"/>
    </ligand>
</feature>
<keyword id="KW-0028">Amino-acid biosynthesis</keyword>
<keyword id="KW-0067">ATP-binding</keyword>
<keyword id="KW-0963">Cytoplasm</keyword>
<keyword id="KW-0418">Kinase</keyword>
<keyword id="KW-0547">Nucleotide-binding</keyword>
<keyword id="KW-0791">Threonine biosynthesis</keyword>
<keyword id="KW-0808">Transferase</keyword>
<accession>Q71WN3</accession>
<comment type="function">
    <text evidence="1">Catalyzes the ATP-dependent phosphorylation of L-homoserine to L-homoserine phosphate.</text>
</comment>
<comment type="catalytic activity">
    <reaction evidence="1">
        <text>L-homoserine + ATP = O-phospho-L-homoserine + ADP + H(+)</text>
        <dbReference type="Rhea" id="RHEA:13985"/>
        <dbReference type="ChEBI" id="CHEBI:15378"/>
        <dbReference type="ChEBI" id="CHEBI:30616"/>
        <dbReference type="ChEBI" id="CHEBI:57476"/>
        <dbReference type="ChEBI" id="CHEBI:57590"/>
        <dbReference type="ChEBI" id="CHEBI:456216"/>
        <dbReference type="EC" id="2.7.1.39"/>
    </reaction>
</comment>
<comment type="pathway">
    <text evidence="1">Amino-acid biosynthesis; L-threonine biosynthesis; L-threonine from L-aspartate: step 4/5.</text>
</comment>
<comment type="subcellular location">
    <subcellularLocation>
        <location evidence="1">Cytoplasm</location>
    </subcellularLocation>
</comment>
<comment type="similarity">
    <text evidence="1">Belongs to the GHMP kinase family. Homoserine kinase subfamily.</text>
</comment>
<gene>
    <name evidence="1" type="primary">thrB</name>
    <name type="ordered locus">LMOf2365_2518</name>
</gene>
<dbReference type="EC" id="2.7.1.39" evidence="1"/>
<dbReference type="EMBL" id="AE017262">
    <property type="protein sequence ID" value="AAT05283.1"/>
    <property type="molecule type" value="Genomic_DNA"/>
</dbReference>
<dbReference type="RefSeq" id="WP_003726353.1">
    <property type="nucleotide sequence ID" value="NC_002973.6"/>
</dbReference>
<dbReference type="SMR" id="Q71WN3"/>
<dbReference type="KEGG" id="lmf:LMOf2365_2518"/>
<dbReference type="HOGENOM" id="CLU_041243_0_0_9"/>
<dbReference type="UniPathway" id="UPA00050">
    <property type="reaction ID" value="UER00064"/>
</dbReference>
<dbReference type="GO" id="GO:0005737">
    <property type="term" value="C:cytoplasm"/>
    <property type="evidence" value="ECO:0007669"/>
    <property type="project" value="UniProtKB-SubCell"/>
</dbReference>
<dbReference type="GO" id="GO:0005524">
    <property type="term" value="F:ATP binding"/>
    <property type="evidence" value="ECO:0007669"/>
    <property type="project" value="UniProtKB-UniRule"/>
</dbReference>
<dbReference type="GO" id="GO:0004413">
    <property type="term" value="F:homoserine kinase activity"/>
    <property type="evidence" value="ECO:0007669"/>
    <property type="project" value="UniProtKB-UniRule"/>
</dbReference>
<dbReference type="GO" id="GO:0009088">
    <property type="term" value="P:threonine biosynthetic process"/>
    <property type="evidence" value="ECO:0007669"/>
    <property type="project" value="UniProtKB-UniRule"/>
</dbReference>
<dbReference type="Gene3D" id="3.30.230.10">
    <property type="match status" value="1"/>
</dbReference>
<dbReference type="Gene3D" id="3.30.70.890">
    <property type="entry name" value="GHMP kinase, C-terminal domain"/>
    <property type="match status" value="1"/>
</dbReference>
<dbReference type="HAMAP" id="MF_00384">
    <property type="entry name" value="Homoser_kinase"/>
    <property type="match status" value="1"/>
</dbReference>
<dbReference type="InterPro" id="IPR013750">
    <property type="entry name" value="GHMP_kinase_C_dom"/>
</dbReference>
<dbReference type="InterPro" id="IPR036554">
    <property type="entry name" value="GHMP_kinase_C_sf"/>
</dbReference>
<dbReference type="InterPro" id="IPR006204">
    <property type="entry name" value="GHMP_kinase_N_dom"/>
</dbReference>
<dbReference type="InterPro" id="IPR006203">
    <property type="entry name" value="GHMP_knse_ATP-bd_CS"/>
</dbReference>
<dbReference type="InterPro" id="IPR000870">
    <property type="entry name" value="Homoserine_kinase"/>
</dbReference>
<dbReference type="InterPro" id="IPR020568">
    <property type="entry name" value="Ribosomal_Su5_D2-typ_SF"/>
</dbReference>
<dbReference type="InterPro" id="IPR014721">
    <property type="entry name" value="Ribsml_uS5_D2-typ_fold_subgr"/>
</dbReference>
<dbReference type="NCBIfam" id="TIGR00191">
    <property type="entry name" value="thrB"/>
    <property type="match status" value="1"/>
</dbReference>
<dbReference type="PANTHER" id="PTHR20861:SF1">
    <property type="entry name" value="HOMOSERINE KINASE"/>
    <property type="match status" value="1"/>
</dbReference>
<dbReference type="PANTHER" id="PTHR20861">
    <property type="entry name" value="HOMOSERINE/4-DIPHOSPHOCYTIDYL-2-C-METHYL-D-ERYTHRITOL KINASE"/>
    <property type="match status" value="1"/>
</dbReference>
<dbReference type="Pfam" id="PF08544">
    <property type="entry name" value="GHMP_kinases_C"/>
    <property type="match status" value="1"/>
</dbReference>
<dbReference type="Pfam" id="PF00288">
    <property type="entry name" value="GHMP_kinases_N"/>
    <property type="match status" value="1"/>
</dbReference>
<dbReference type="PIRSF" id="PIRSF000676">
    <property type="entry name" value="Homoser_kin"/>
    <property type="match status" value="1"/>
</dbReference>
<dbReference type="PRINTS" id="PR00958">
    <property type="entry name" value="HOMSERKINASE"/>
</dbReference>
<dbReference type="SUPFAM" id="SSF55060">
    <property type="entry name" value="GHMP Kinase, C-terminal domain"/>
    <property type="match status" value="1"/>
</dbReference>
<dbReference type="SUPFAM" id="SSF54211">
    <property type="entry name" value="Ribosomal protein S5 domain 2-like"/>
    <property type="match status" value="1"/>
</dbReference>
<dbReference type="PROSITE" id="PS00627">
    <property type="entry name" value="GHMP_KINASES_ATP"/>
    <property type="match status" value="1"/>
</dbReference>
<evidence type="ECO:0000255" key="1">
    <source>
        <dbReference type="HAMAP-Rule" id="MF_00384"/>
    </source>
</evidence>
<reference key="1">
    <citation type="journal article" date="2004" name="Nucleic Acids Res.">
        <title>Whole genome comparisons of serotype 4b and 1/2a strains of the food-borne pathogen Listeria monocytogenes reveal new insights into the core genome components of this species.</title>
        <authorList>
            <person name="Nelson K.E."/>
            <person name="Fouts D.E."/>
            <person name="Mongodin E.F."/>
            <person name="Ravel J."/>
            <person name="DeBoy R.T."/>
            <person name="Kolonay J.F."/>
            <person name="Rasko D.A."/>
            <person name="Angiuoli S.V."/>
            <person name="Gill S.R."/>
            <person name="Paulsen I.T."/>
            <person name="Peterson J.D."/>
            <person name="White O."/>
            <person name="Nelson W.C."/>
            <person name="Nierman W.C."/>
            <person name="Beanan M.J."/>
            <person name="Brinkac L.M."/>
            <person name="Daugherty S.C."/>
            <person name="Dodson R.J."/>
            <person name="Durkin A.S."/>
            <person name="Madupu R."/>
            <person name="Haft D.H."/>
            <person name="Selengut J."/>
            <person name="Van Aken S.E."/>
            <person name="Khouri H.M."/>
            <person name="Fedorova N."/>
            <person name="Forberger H.A."/>
            <person name="Tran B."/>
            <person name="Kathariou S."/>
            <person name="Wonderling L.D."/>
            <person name="Uhlich G.A."/>
            <person name="Bayles D.O."/>
            <person name="Luchansky J.B."/>
            <person name="Fraser C.M."/>
        </authorList>
    </citation>
    <scope>NUCLEOTIDE SEQUENCE [LARGE SCALE GENOMIC DNA]</scope>
    <source>
        <strain>F2365</strain>
    </source>
</reference>
<sequence length="288" mass="30778">MRIRVPATTANLGPGFDSCGLALTLYLTLDIGAEADSWYIEHNIGGGIPHDETNVIIETALNLAPNLTPHHLVMTCDIPPARGLGSSSAAVVAGIELANTLAELNLSKEEKVRIAAEIEGHPDNVAPAVLGNWVVGAKLDGEDFYVRHLFPDCALIAFIPKAELLTSESRGVLPDTLPFKEAVQASSIANVMIAAILRNDMALAGEMMERDLWHEKYRSQLVPHLTQIRDVAKSQGAYAACLSGAGPTVLVFAPRNLANTLQTSLQTLEIDADVLLLDVEGSGAEVFR</sequence>
<protein>
    <recommendedName>
        <fullName evidence="1">Homoserine kinase</fullName>
        <shortName evidence="1">HK</shortName>
        <shortName evidence="1">HSK</shortName>
        <ecNumber evidence="1">2.7.1.39</ecNumber>
    </recommendedName>
</protein>
<proteinExistence type="inferred from homology"/>